<name>REX_CARHZ</name>
<dbReference type="EMBL" id="CP000141">
    <property type="protein sequence ID" value="ABB15618.1"/>
    <property type="molecule type" value="Genomic_DNA"/>
</dbReference>
<dbReference type="RefSeq" id="WP_011343278.1">
    <property type="nucleotide sequence ID" value="NC_007503.1"/>
</dbReference>
<dbReference type="SMR" id="Q3AF82"/>
<dbReference type="FunCoup" id="Q3AF82">
    <property type="interactions" value="22"/>
</dbReference>
<dbReference type="STRING" id="246194.CHY_0339"/>
<dbReference type="KEGG" id="chy:CHY_0339"/>
<dbReference type="eggNOG" id="COG2344">
    <property type="taxonomic scope" value="Bacteria"/>
</dbReference>
<dbReference type="HOGENOM" id="CLU_061534_0_1_9"/>
<dbReference type="InParanoid" id="Q3AF82"/>
<dbReference type="OrthoDB" id="9784760at2"/>
<dbReference type="Proteomes" id="UP000002706">
    <property type="component" value="Chromosome"/>
</dbReference>
<dbReference type="GO" id="GO:0005737">
    <property type="term" value="C:cytoplasm"/>
    <property type="evidence" value="ECO:0007669"/>
    <property type="project" value="UniProtKB-SubCell"/>
</dbReference>
<dbReference type="GO" id="GO:0003677">
    <property type="term" value="F:DNA binding"/>
    <property type="evidence" value="ECO:0007669"/>
    <property type="project" value="UniProtKB-UniRule"/>
</dbReference>
<dbReference type="GO" id="GO:0003700">
    <property type="term" value="F:DNA-binding transcription factor activity"/>
    <property type="evidence" value="ECO:0007669"/>
    <property type="project" value="UniProtKB-UniRule"/>
</dbReference>
<dbReference type="GO" id="GO:0045892">
    <property type="term" value="P:negative regulation of DNA-templated transcription"/>
    <property type="evidence" value="ECO:0007669"/>
    <property type="project" value="InterPro"/>
</dbReference>
<dbReference type="GO" id="GO:0051775">
    <property type="term" value="P:response to redox state"/>
    <property type="evidence" value="ECO:0007669"/>
    <property type="project" value="InterPro"/>
</dbReference>
<dbReference type="Gene3D" id="3.40.50.720">
    <property type="entry name" value="NAD(P)-binding Rossmann-like Domain"/>
    <property type="match status" value="1"/>
</dbReference>
<dbReference type="Gene3D" id="1.10.10.10">
    <property type="entry name" value="Winged helix-like DNA-binding domain superfamily/Winged helix DNA-binding domain"/>
    <property type="match status" value="1"/>
</dbReference>
<dbReference type="HAMAP" id="MF_01131">
    <property type="entry name" value="Rex"/>
    <property type="match status" value="1"/>
</dbReference>
<dbReference type="InterPro" id="IPR003781">
    <property type="entry name" value="CoA-bd"/>
</dbReference>
<dbReference type="InterPro" id="IPR036291">
    <property type="entry name" value="NAD(P)-bd_dom_sf"/>
</dbReference>
<dbReference type="InterPro" id="IPR009718">
    <property type="entry name" value="Rex_DNA-bd_C_dom"/>
</dbReference>
<dbReference type="InterPro" id="IPR022876">
    <property type="entry name" value="Tscrpt_rep_Rex"/>
</dbReference>
<dbReference type="InterPro" id="IPR036388">
    <property type="entry name" value="WH-like_DNA-bd_sf"/>
</dbReference>
<dbReference type="InterPro" id="IPR036390">
    <property type="entry name" value="WH_DNA-bd_sf"/>
</dbReference>
<dbReference type="NCBIfam" id="NF003989">
    <property type="entry name" value="PRK05472.1-3"/>
    <property type="match status" value="1"/>
</dbReference>
<dbReference type="NCBIfam" id="NF003992">
    <property type="entry name" value="PRK05472.2-1"/>
    <property type="match status" value="1"/>
</dbReference>
<dbReference type="NCBIfam" id="NF003993">
    <property type="entry name" value="PRK05472.2-2"/>
    <property type="match status" value="1"/>
</dbReference>
<dbReference type="NCBIfam" id="NF003994">
    <property type="entry name" value="PRK05472.2-3"/>
    <property type="match status" value="1"/>
</dbReference>
<dbReference type="NCBIfam" id="NF003995">
    <property type="entry name" value="PRK05472.2-4"/>
    <property type="match status" value="1"/>
</dbReference>
<dbReference type="NCBIfam" id="NF003996">
    <property type="entry name" value="PRK05472.2-5"/>
    <property type="match status" value="1"/>
</dbReference>
<dbReference type="PANTHER" id="PTHR35786">
    <property type="entry name" value="REDOX-SENSING TRANSCRIPTIONAL REPRESSOR REX"/>
    <property type="match status" value="1"/>
</dbReference>
<dbReference type="PANTHER" id="PTHR35786:SF1">
    <property type="entry name" value="REDOX-SENSING TRANSCRIPTIONAL REPRESSOR REX 1"/>
    <property type="match status" value="1"/>
</dbReference>
<dbReference type="Pfam" id="PF02629">
    <property type="entry name" value="CoA_binding"/>
    <property type="match status" value="1"/>
</dbReference>
<dbReference type="Pfam" id="PF06971">
    <property type="entry name" value="Put_DNA-bind_N"/>
    <property type="match status" value="1"/>
</dbReference>
<dbReference type="SMART" id="SM00881">
    <property type="entry name" value="CoA_binding"/>
    <property type="match status" value="1"/>
</dbReference>
<dbReference type="SUPFAM" id="SSF51735">
    <property type="entry name" value="NAD(P)-binding Rossmann-fold domains"/>
    <property type="match status" value="1"/>
</dbReference>
<dbReference type="SUPFAM" id="SSF46785">
    <property type="entry name" value="Winged helix' DNA-binding domain"/>
    <property type="match status" value="1"/>
</dbReference>
<reference key="1">
    <citation type="journal article" date="2005" name="PLoS Genet.">
        <title>Life in hot carbon monoxide: the complete genome sequence of Carboxydothermus hydrogenoformans Z-2901.</title>
        <authorList>
            <person name="Wu M."/>
            <person name="Ren Q."/>
            <person name="Durkin A.S."/>
            <person name="Daugherty S.C."/>
            <person name="Brinkac L.M."/>
            <person name="Dodson R.J."/>
            <person name="Madupu R."/>
            <person name="Sullivan S.A."/>
            <person name="Kolonay J.F."/>
            <person name="Nelson W.C."/>
            <person name="Tallon L.J."/>
            <person name="Jones K.M."/>
            <person name="Ulrich L.E."/>
            <person name="Gonzalez J.M."/>
            <person name="Zhulin I.B."/>
            <person name="Robb F.T."/>
            <person name="Eisen J.A."/>
        </authorList>
    </citation>
    <scope>NUCLEOTIDE SEQUENCE [LARGE SCALE GENOMIC DNA]</scope>
    <source>
        <strain>ATCC BAA-161 / DSM 6008 / Z-2901</strain>
    </source>
</reference>
<proteinExistence type="inferred from homology"/>
<feature type="chain" id="PRO_1000213630" description="Redox-sensing transcriptional repressor Rex">
    <location>
        <begin position="1"/>
        <end position="208"/>
    </location>
</feature>
<feature type="DNA-binding region" description="H-T-H motif" evidence="1">
    <location>
        <begin position="16"/>
        <end position="55"/>
    </location>
</feature>
<feature type="binding site" evidence="1">
    <location>
        <begin position="90"/>
        <end position="95"/>
    </location>
    <ligand>
        <name>NAD(+)</name>
        <dbReference type="ChEBI" id="CHEBI:57540"/>
    </ligand>
</feature>
<organism>
    <name type="scientific">Carboxydothermus hydrogenoformans (strain ATCC BAA-161 / DSM 6008 / Z-2901)</name>
    <dbReference type="NCBI Taxonomy" id="246194"/>
    <lineage>
        <taxon>Bacteria</taxon>
        <taxon>Bacillati</taxon>
        <taxon>Bacillota</taxon>
        <taxon>Clostridia</taxon>
        <taxon>Thermoanaerobacterales</taxon>
        <taxon>Thermoanaerobacteraceae</taxon>
        <taxon>Carboxydothermus</taxon>
    </lineage>
</organism>
<protein>
    <recommendedName>
        <fullName evidence="1">Redox-sensing transcriptional repressor Rex</fullName>
    </recommendedName>
</protein>
<sequence>MKGFKIPEATISRLSVYSRYLENLYRKGITTVSSADIAQGVGVTSAQVRKDLAYFGEFGTRGVGYNVKELLDHTLKILGLNNTWNMVVVGAGNLGSALCAYRGFRERGFYIVGVFDNDLTKIGKKINEYEVLPIDKLEEVVRENNVEIGIIAVPAAYAQDVATRLVKAGVKGILNFAPTVLNVPDKVIVRSVDLTVNLEVLTFNIRRD</sequence>
<accession>Q3AF82</accession>
<keyword id="KW-0963">Cytoplasm</keyword>
<keyword id="KW-0238">DNA-binding</keyword>
<keyword id="KW-0520">NAD</keyword>
<keyword id="KW-1185">Reference proteome</keyword>
<keyword id="KW-0678">Repressor</keyword>
<keyword id="KW-0804">Transcription</keyword>
<keyword id="KW-0805">Transcription regulation</keyword>
<comment type="function">
    <text evidence="1">Modulates transcription in response to changes in cellular NADH/NAD(+) redox state.</text>
</comment>
<comment type="subunit">
    <text evidence="1">Homodimer.</text>
</comment>
<comment type="subcellular location">
    <subcellularLocation>
        <location evidence="1">Cytoplasm</location>
    </subcellularLocation>
</comment>
<comment type="similarity">
    <text evidence="1">Belongs to the transcriptional regulatory Rex family.</text>
</comment>
<evidence type="ECO:0000255" key="1">
    <source>
        <dbReference type="HAMAP-Rule" id="MF_01131"/>
    </source>
</evidence>
<gene>
    <name evidence="1" type="primary">rex</name>
    <name type="ordered locus">CHY_0339</name>
</gene>